<organism>
    <name type="scientific">Mus musculus</name>
    <name type="common">Mouse</name>
    <dbReference type="NCBI Taxonomy" id="10090"/>
    <lineage>
        <taxon>Eukaryota</taxon>
        <taxon>Metazoa</taxon>
        <taxon>Chordata</taxon>
        <taxon>Craniata</taxon>
        <taxon>Vertebrata</taxon>
        <taxon>Euteleostomi</taxon>
        <taxon>Mammalia</taxon>
        <taxon>Eutheria</taxon>
        <taxon>Euarchontoglires</taxon>
        <taxon>Glires</taxon>
        <taxon>Rodentia</taxon>
        <taxon>Myomorpha</taxon>
        <taxon>Muroidea</taxon>
        <taxon>Muridae</taxon>
        <taxon>Murinae</taxon>
        <taxon>Mus</taxon>
        <taxon>Mus</taxon>
    </lineage>
</organism>
<proteinExistence type="evidence at protein level"/>
<comment type="subunit">
    <text evidence="4">Monomer.</text>
</comment>
<comment type="subcellular location">
    <subcellularLocation>
        <location evidence="1">Cell membrane</location>
        <topology evidence="1">Lipid-anchor</topology>
        <topology evidence="1">GPI-anchor</topology>
    </subcellularLocation>
</comment>
<comment type="tissue specificity">
    <text evidence="4">Highly expressed at the leading edges of cells, on filopodia.</text>
</comment>
<comment type="PTM">
    <text evidence="3 4">N-glycosylated.</text>
</comment>
<gene>
    <name type="primary">Ly6g6c</name>
    <name type="synonym">Ng24</name>
</gene>
<accession>Q9Z1Q4</accession>
<evidence type="ECO:0000250" key="1"/>
<evidence type="ECO:0000255" key="2"/>
<evidence type="ECO:0000269" key="3">
    <source>
    </source>
</evidence>
<evidence type="ECO:0000269" key="4">
    <source>
    </source>
</evidence>
<reference key="1">
    <citation type="journal article" date="2003" name="Genome Res.">
        <title>Analysis of the gene-dense major histocompatibility complex class III region and its comparison to mouse.</title>
        <authorList>
            <person name="Xie T."/>
            <person name="Rowen L."/>
            <person name="Aguado B."/>
            <person name="Ahearn M.E."/>
            <person name="Madan A."/>
            <person name="Qin S."/>
            <person name="Campbell R.D."/>
            <person name="Hood L."/>
        </authorList>
    </citation>
    <scope>NUCLEOTIDE SEQUENCE [LARGE SCALE GENOMIC DNA]</scope>
    <source>
        <strain>129</strain>
    </source>
</reference>
<reference key="2">
    <citation type="journal article" date="2005" name="Mol. Cell. Proteomics">
        <title>High throughput quantitative glycomics and glycoform-focused proteomics of murine dermis and epidermis.</title>
        <authorList>
            <person name="Uematsu R."/>
            <person name="Furukawa J."/>
            <person name="Nakagawa H."/>
            <person name="Shinohara Y."/>
            <person name="Deguchi K."/>
            <person name="Monde K."/>
            <person name="Nishimura S."/>
        </authorList>
    </citation>
    <scope>GLYCOSYLATION [LARGE SCALE ANALYSIS] AT ASN-89</scope>
    <source>
        <tissue>Epidermis</tissue>
    </source>
</reference>
<reference key="3">
    <citation type="journal article" date="2006" name="Protein Sci.">
        <title>Characterization of the five novel Ly-6 superfamily members encoded in the MHC, and detection of cells expressing their potential ligands.</title>
        <authorList>
            <person name="Mallya M."/>
            <person name="Campbell R.D."/>
            <person name="Aguado B."/>
        </authorList>
    </citation>
    <scope>GLYCOSYLATION</scope>
    <scope>SUBCELLULAR LOCATION</scope>
    <scope>SUBUNIT</scope>
    <scope>GPI-ANCHOR</scope>
    <scope>TISSUE SPECIFICITY</scope>
</reference>
<dbReference type="EMBL" id="AF109905">
    <property type="protein sequence ID" value="AAC84157.1"/>
    <property type="molecule type" value="Genomic_DNA"/>
</dbReference>
<dbReference type="CCDS" id="CCDS28677.1"/>
<dbReference type="RefSeq" id="NP_075952.1">
    <property type="nucleotide sequence ID" value="NM_023463.3"/>
</dbReference>
<dbReference type="FunCoup" id="Q9Z1Q4">
    <property type="interactions" value="18"/>
</dbReference>
<dbReference type="STRING" id="10090.ENSMUSP00000133510"/>
<dbReference type="GlyCosmos" id="Q9Z1Q4">
    <property type="glycosylation" value="1 site, No reported glycans"/>
</dbReference>
<dbReference type="GlyGen" id="Q9Z1Q4">
    <property type="glycosylation" value="2 sites"/>
</dbReference>
<dbReference type="iPTMnet" id="Q9Z1Q4"/>
<dbReference type="PhosphoSitePlus" id="Q9Z1Q4"/>
<dbReference type="PaxDb" id="10090-ENSMUSP00000133510"/>
<dbReference type="ProteomicsDB" id="290195"/>
<dbReference type="Pumba" id="Q9Z1Q4"/>
<dbReference type="Antibodypedia" id="27576">
    <property type="antibodies" value="91 antibodies from 18 providers"/>
</dbReference>
<dbReference type="DNASU" id="68468"/>
<dbReference type="Ensembl" id="ENSMUST00000173478.2">
    <property type="protein sequence ID" value="ENSMUSP00000133510.2"/>
    <property type="gene ID" value="ENSMUSG00000092586.9"/>
</dbReference>
<dbReference type="GeneID" id="68468"/>
<dbReference type="KEGG" id="mmu:68468"/>
<dbReference type="UCSC" id="uc008cfm.1">
    <property type="organism name" value="mouse"/>
</dbReference>
<dbReference type="AGR" id="MGI:2148930"/>
<dbReference type="CTD" id="80740"/>
<dbReference type="MGI" id="MGI:2148930">
    <property type="gene designation" value="Ly6g6c"/>
</dbReference>
<dbReference type="VEuPathDB" id="HostDB:ENSMUSG00000092586"/>
<dbReference type="eggNOG" id="ENOG502T0T6">
    <property type="taxonomic scope" value="Eukaryota"/>
</dbReference>
<dbReference type="GeneTree" id="ENSGT00390000000752"/>
<dbReference type="HOGENOM" id="CLU_1991884_0_0_1"/>
<dbReference type="InParanoid" id="Q9Z1Q4"/>
<dbReference type="OrthoDB" id="68386at9989"/>
<dbReference type="PhylomeDB" id="Q9Z1Q4"/>
<dbReference type="TreeFam" id="TF337667"/>
<dbReference type="Reactome" id="R-MMU-163125">
    <property type="pathway name" value="Post-translational modification: synthesis of GPI-anchored proteins"/>
</dbReference>
<dbReference type="BioGRID-ORCS" id="68468">
    <property type="hits" value="1 hit in 80 CRISPR screens"/>
</dbReference>
<dbReference type="ChiTaRS" id="Ly6g6c">
    <property type="organism name" value="mouse"/>
</dbReference>
<dbReference type="PRO" id="PR:Q9Z1Q4"/>
<dbReference type="Proteomes" id="UP000000589">
    <property type="component" value="Chromosome 17"/>
</dbReference>
<dbReference type="RNAct" id="Q9Z1Q4">
    <property type="molecule type" value="protein"/>
</dbReference>
<dbReference type="Bgee" id="ENSMUSG00000092586">
    <property type="expression patterns" value="Expressed in lip and 52 other cell types or tissues"/>
</dbReference>
<dbReference type="ExpressionAtlas" id="Q9Z1Q4">
    <property type="expression patterns" value="baseline and differential"/>
</dbReference>
<dbReference type="GO" id="GO:0005886">
    <property type="term" value="C:plasma membrane"/>
    <property type="evidence" value="ECO:0007669"/>
    <property type="project" value="UniProtKB-SubCell"/>
</dbReference>
<dbReference type="GO" id="GO:0032991">
    <property type="term" value="C:protein-containing complex"/>
    <property type="evidence" value="ECO:0000314"/>
    <property type="project" value="UniProtKB"/>
</dbReference>
<dbReference type="GO" id="GO:0098552">
    <property type="term" value="C:side of membrane"/>
    <property type="evidence" value="ECO:0007669"/>
    <property type="project" value="UniProtKB-KW"/>
</dbReference>
<dbReference type="GO" id="GO:0042802">
    <property type="term" value="F:identical protein binding"/>
    <property type="evidence" value="ECO:0000314"/>
    <property type="project" value="UniProtKB"/>
</dbReference>
<dbReference type="GO" id="GO:0009617">
    <property type="term" value="P:response to bacterium"/>
    <property type="evidence" value="ECO:0000270"/>
    <property type="project" value="MGI"/>
</dbReference>
<dbReference type="CDD" id="cd23546">
    <property type="entry name" value="TFP_LU_ECD_Ly6G6c"/>
    <property type="match status" value="1"/>
</dbReference>
<dbReference type="InterPro" id="IPR016054">
    <property type="entry name" value="LY6_UPA_recep-like"/>
</dbReference>
<dbReference type="InterPro" id="IPR039237">
    <property type="entry name" value="LY6G6C"/>
</dbReference>
<dbReference type="InterPro" id="IPR045860">
    <property type="entry name" value="Snake_toxin-like_sf"/>
</dbReference>
<dbReference type="PANTHER" id="PTHR32149">
    <property type="entry name" value="LYMPHOCYTE ANTIGEN 6 COMPLEX LOCUS PROTEIN G6C"/>
    <property type="match status" value="1"/>
</dbReference>
<dbReference type="PANTHER" id="PTHR32149:SF2">
    <property type="entry name" value="LYMPHOCYTE ANTIGEN 6 COMPLEX LOCUS PROTEIN G6C"/>
    <property type="match status" value="1"/>
</dbReference>
<dbReference type="Pfam" id="PF00021">
    <property type="entry name" value="UPAR_LY6"/>
    <property type="match status" value="1"/>
</dbReference>
<dbReference type="SUPFAM" id="SSF57302">
    <property type="entry name" value="Snake toxin-like"/>
    <property type="match status" value="1"/>
</dbReference>
<name>LY66C_MOUSE</name>
<protein>
    <recommendedName>
        <fullName>Lymphocyte antigen 6 complex locus protein G6c</fullName>
    </recommendedName>
</protein>
<sequence>MKHLLLLTLSALLYCWVSADTRCHSCYKVPVLGCVDRQSCRLEPGHKCLTTNVYLGKMWVFSNLRCGTPEEPCREVFNETNHKLGLNYNTTCCDKDNCNSPAPRPTPALALISLTSLAGLGLWLLH</sequence>
<feature type="signal peptide" evidence="2">
    <location>
        <begin position="1"/>
        <end position="19"/>
    </location>
</feature>
<feature type="chain" id="PRO_0000036177" description="Lymphocyte antigen 6 complex locus protein G6c">
    <location>
        <begin position="20"/>
        <end position="100"/>
    </location>
</feature>
<feature type="propeptide" id="PRO_0000323020" description="Removed in mature form" evidence="2">
    <location>
        <begin position="101"/>
        <end position="126"/>
    </location>
</feature>
<feature type="domain" description="UPAR/Ly6">
    <location>
        <begin position="21"/>
        <end position="112"/>
    </location>
</feature>
<feature type="lipid moiety-binding region" description="GPI-anchor amidated serine" evidence="2">
    <location>
        <position position="100"/>
    </location>
</feature>
<feature type="glycosylation site" description="N-linked (GlcNAc...) (high mannose) asparagine" evidence="3">
    <location>
        <position position="89"/>
    </location>
</feature>
<feature type="disulfide bond" evidence="1">
    <location>
        <begin position="23"/>
        <end position="48"/>
    </location>
</feature>
<feature type="disulfide bond" evidence="1">
    <location>
        <begin position="26"/>
        <end position="34"/>
    </location>
</feature>
<feature type="disulfide bond" evidence="1">
    <location>
        <begin position="40"/>
        <end position="66"/>
    </location>
</feature>
<feature type="disulfide bond" evidence="1">
    <location>
        <begin position="93"/>
        <end position="98"/>
    </location>
</feature>
<keyword id="KW-1003">Cell membrane</keyword>
<keyword id="KW-1015">Disulfide bond</keyword>
<keyword id="KW-0325">Glycoprotein</keyword>
<keyword id="KW-0336">GPI-anchor</keyword>
<keyword id="KW-0449">Lipoprotein</keyword>
<keyword id="KW-0472">Membrane</keyword>
<keyword id="KW-1185">Reference proteome</keyword>
<keyword id="KW-0732">Signal</keyword>